<dbReference type="EC" id="2.3.1.234" evidence="1"/>
<dbReference type="EMBL" id="CP000702">
    <property type="protein sequence ID" value="ABQ46799.1"/>
    <property type="molecule type" value="Genomic_DNA"/>
</dbReference>
<dbReference type="RefSeq" id="WP_011943367.1">
    <property type="nucleotide sequence ID" value="NC_009486.1"/>
</dbReference>
<dbReference type="SMR" id="A5IKS6"/>
<dbReference type="STRING" id="390874.Tpet_0780"/>
<dbReference type="KEGG" id="tpt:Tpet_0780"/>
<dbReference type="eggNOG" id="COG0533">
    <property type="taxonomic scope" value="Bacteria"/>
</dbReference>
<dbReference type="HOGENOM" id="CLU_023208_0_2_0"/>
<dbReference type="Proteomes" id="UP000006558">
    <property type="component" value="Chromosome"/>
</dbReference>
<dbReference type="GO" id="GO:0005737">
    <property type="term" value="C:cytoplasm"/>
    <property type="evidence" value="ECO:0007669"/>
    <property type="project" value="UniProtKB-SubCell"/>
</dbReference>
<dbReference type="GO" id="GO:0005506">
    <property type="term" value="F:iron ion binding"/>
    <property type="evidence" value="ECO:0007669"/>
    <property type="project" value="UniProtKB-UniRule"/>
</dbReference>
<dbReference type="GO" id="GO:0061711">
    <property type="term" value="F:N(6)-L-threonylcarbamoyladenine synthase activity"/>
    <property type="evidence" value="ECO:0007669"/>
    <property type="project" value="UniProtKB-EC"/>
</dbReference>
<dbReference type="GO" id="GO:0002949">
    <property type="term" value="P:tRNA threonylcarbamoyladenosine modification"/>
    <property type="evidence" value="ECO:0007669"/>
    <property type="project" value="UniProtKB-UniRule"/>
</dbReference>
<dbReference type="CDD" id="cd24133">
    <property type="entry name" value="ASKHA_NBD_TsaD_bac"/>
    <property type="match status" value="1"/>
</dbReference>
<dbReference type="FunFam" id="3.30.420.40:FF:000012">
    <property type="entry name" value="tRNA N6-adenosine threonylcarbamoyltransferase"/>
    <property type="match status" value="1"/>
</dbReference>
<dbReference type="FunFam" id="3.30.420.40:FF:000040">
    <property type="entry name" value="tRNA N6-adenosine threonylcarbamoyltransferase"/>
    <property type="match status" value="1"/>
</dbReference>
<dbReference type="Gene3D" id="3.30.420.40">
    <property type="match status" value="2"/>
</dbReference>
<dbReference type="HAMAP" id="MF_01445">
    <property type="entry name" value="TsaD"/>
    <property type="match status" value="1"/>
</dbReference>
<dbReference type="InterPro" id="IPR043129">
    <property type="entry name" value="ATPase_NBD"/>
</dbReference>
<dbReference type="InterPro" id="IPR000905">
    <property type="entry name" value="Gcp-like_dom"/>
</dbReference>
<dbReference type="InterPro" id="IPR017861">
    <property type="entry name" value="KAE1/TsaD"/>
</dbReference>
<dbReference type="InterPro" id="IPR022450">
    <property type="entry name" value="TsaD"/>
</dbReference>
<dbReference type="NCBIfam" id="TIGR00329">
    <property type="entry name" value="gcp_kae1"/>
    <property type="match status" value="1"/>
</dbReference>
<dbReference type="NCBIfam" id="TIGR03723">
    <property type="entry name" value="T6A_TsaD_YgjD"/>
    <property type="match status" value="1"/>
</dbReference>
<dbReference type="PANTHER" id="PTHR11735">
    <property type="entry name" value="TRNA N6-ADENOSINE THREONYLCARBAMOYLTRANSFERASE"/>
    <property type="match status" value="1"/>
</dbReference>
<dbReference type="PANTHER" id="PTHR11735:SF6">
    <property type="entry name" value="TRNA N6-ADENOSINE THREONYLCARBAMOYLTRANSFERASE, MITOCHONDRIAL"/>
    <property type="match status" value="1"/>
</dbReference>
<dbReference type="Pfam" id="PF00814">
    <property type="entry name" value="TsaD"/>
    <property type="match status" value="1"/>
</dbReference>
<dbReference type="PRINTS" id="PR00789">
    <property type="entry name" value="OSIALOPTASE"/>
</dbReference>
<dbReference type="SUPFAM" id="SSF53067">
    <property type="entry name" value="Actin-like ATPase domain"/>
    <property type="match status" value="2"/>
</dbReference>
<gene>
    <name evidence="1" type="primary">tsaD</name>
    <name type="synonym">gcp</name>
    <name type="ordered locus">Tpet_0780</name>
</gene>
<comment type="function">
    <text evidence="1">Required for the formation of a threonylcarbamoyl group on adenosine at position 37 (t(6)A37) in tRNAs that read codons beginning with adenine. Is involved in the transfer of the threonylcarbamoyl moiety of threonylcarbamoyl-AMP (TC-AMP) to the N6 group of A37, together with TsaE and TsaB. TsaD likely plays a direct catalytic role in this reaction.</text>
</comment>
<comment type="catalytic activity">
    <reaction evidence="1">
        <text>L-threonylcarbamoyladenylate + adenosine(37) in tRNA = N(6)-L-threonylcarbamoyladenosine(37) in tRNA + AMP + H(+)</text>
        <dbReference type="Rhea" id="RHEA:37059"/>
        <dbReference type="Rhea" id="RHEA-COMP:10162"/>
        <dbReference type="Rhea" id="RHEA-COMP:10163"/>
        <dbReference type="ChEBI" id="CHEBI:15378"/>
        <dbReference type="ChEBI" id="CHEBI:73682"/>
        <dbReference type="ChEBI" id="CHEBI:74411"/>
        <dbReference type="ChEBI" id="CHEBI:74418"/>
        <dbReference type="ChEBI" id="CHEBI:456215"/>
        <dbReference type="EC" id="2.3.1.234"/>
    </reaction>
</comment>
<comment type="cofactor">
    <cofactor evidence="1">
        <name>Fe(2+)</name>
        <dbReference type="ChEBI" id="CHEBI:29033"/>
    </cofactor>
    <text evidence="1">Binds 1 Fe(2+) ion per subunit.</text>
</comment>
<comment type="subcellular location">
    <subcellularLocation>
        <location evidence="1">Cytoplasm</location>
    </subcellularLocation>
</comment>
<comment type="similarity">
    <text evidence="1">Belongs to the KAE1 / TsaD family.</text>
</comment>
<name>TSAD_THEP1</name>
<organism>
    <name type="scientific">Thermotoga petrophila (strain ATCC BAA-488 / DSM 13995 / JCM 10881 / RKU-1)</name>
    <dbReference type="NCBI Taxonomy" id="390874"/>
    <lineage>
        <taxon>Bacteria</taxon>
        <taxon>Thermotogati</taxon>
        <taxon>Thermotogota</taxon>
        <taxon>Thermotogae</taxon>
        <taxon>Thermotogales</taxon>
        <taxon>Thermotogaceae</taxon>
        <taxon>Thermotoga</taxon>
    </lineage>
</organism>
<reference key="1">
    <citation type="submission" date="2007-05" db="EMBL/GenBank/DDBJ databases">
        <title>Complete sequence of Thermotoga petrophila RKU-1.</title>
        <authorList>
            <consortium name="US DOE Joint Genome Institute"/>
            <person name="Copeland A."/>
            <person name="Lucas S."/>
            <person name="Lapidus A."/>
            <person name="Barry K."/>
            <person name="Glavina del Rio T."/>
            <person name="Dalin E."/>
            <person name="Tice H."/>
            <person name="Pitluck S."/>
            <person name="Sims D."/>
            <person name="Brettin T."/>
            <person name="Bruce D."/>
            <person name="Detter J.C."/>
            <person name="Han C."/>
            <person name="Tapia R."/>
            <person name="Schmutz J."/>
            <person name="Larimer F."/>
            <person name="Land M."/>
            <person name="Hauser L."/>
            <person name="Kyrpides N."/>
            <person name="Mikhailova N."/>
            <person name="Nelson K."/>
            <person name="Gogarten J.P."/>
            <person name="Noll K."/>
            <person name="Richardson P."/>
        </authorList>
    </citation>
    <scope>NUCLEOTIDE SEQUENCE [LARGE SCALE GENOMIC DNA]</scope>
    <source>
        <strain>ATCC BAA-488 / DSM 13995 / JCM 10881 / RKU-1</strain>
    </source>
</reference>
<evidence type="ECO:0000255" key="1">
    <source>
        <dbReference type="HAMAP-Rule" id="MF_01445"/>
    </source>
</evidence>
<keyword id="KW-0012">Acyltransferase</keyword>
<keyword id="KW-0963">Cytoplasm</keyword>
<keyword id="KW-0408">Iron</keyword>
<keyword id="KW-0479">Metal-binding</keyword>
<keyword id="KW-0808">Transferase</keyword>
<keyword id="KW-0819">tRNA processing</keyword>
<proteinExistence type="inferred from homology"/>
<sequence>MRVLGIETSCDETAVAVLDNGKNVVVNFTVSQIEIHQKFGGVVPEVAARHHLKNLPILLKKAFEKVPPETVDVVAATYGPGLIGALLVGLSAAKGLAISLEKPFVGVNHVEAHVQAVFLANPDLKPPLVVLMVSGGHTQLMKVNEDYSMEVLGETLDDSAGEAFDKVARLLGLGYPGGPVIDRVAKKGDPEKYSFPRPMLDDDSYNFSFAGLKTSVLYFLQREKDYKVEDVAASFQKAVVDILVEKTFRLARNLGIRKIAFVGGVAANSMLREEVRKRAERWNYEVFFPPLELCTDNALMVAKAGYEKAKRGMFSPLNLNADPNLNV</sequence>
<feature type="chain" id="PRO_1000024462" description="tRNA N6-adenosine threonylcarbamoyltransferase">
    <location>
        <begin position="1"/>
        <end position="327"/>
    </location>
</feature>
<feature type="binding site" evidence="1">
    <location>
        <position position="109"/>
    </location>
    <ligand>
        <name>Fe cation</name>
        <dbReference type="ChEBI" id="CHEBI:24875"/>
    </ligand>
</feature>
<feature type="binding site" evidence="1">
    <location>
        <position position="113"/>
    </location>
    <ligand>
        <name>Fe cation</name>
        <dbReference type="ChEBI" id="CHEBI:24875"/>
    </ligand>
</feature>
<feature type="binding site" evidence="1">
    <location>
        <begin position="132"/>
        <end position="136"/>
    </location>
    <ligand>
        <name>substrate</name>
    </ligand>
</feature>
<feature type="binding site" evidence="1">
    <location>
        <position position="165"/>
    </location>
    <ligand>
        <name>substrate</name>
    </ligand>
</feature>
<feature type="binding site" evidence="1">
    <location>
        <position position="178"/>
    </location>
    <ligand>
        <name>substrate</name>
    </ligand>
</feature>
<feature type="binding site" evidence="1">
    <location>
        <position position="182"/>
    </location>
    <ligand>
        <name>substrate</name>
    </ligand>
</feature>
<feature type="binding site" evidence="1">
    <location>
        <position position="268"/>
    </location>
    <ligand>
        <name>substrate</name>
    </ligand>
</feature>
<feature type="binding site" evidence="1">
    <location>
        <position position="296"/>
    </location>
    <ligand>
        <name>Fe cation</name>
        <dbReference type="ChEBI" id="CHEBI:24875"/>
    </ligand>
</feature>
<accession>A5IKS6</accession>
<protein>
    <recommendedName>
        <fullName evidence="1">tRNA N6-adenosine threonylcarbamoyltransferase</fullName>
        <ecNumber evidence="1">2.3.1.234</ecNumber>
    </recommendedName>
    <alternativeName>
        <fullName evidence="1">N6-L-threonylcarbamoyladenine synthase</fullName>
        <shortName evidence="1">t(6)A synthase</shortName>
    </alternativeName>
    <alternativeName>
        <fullName evidence="1">t(6)A37 threonylcarbamoyladenosine biosynthesis protein TsaD</fullName>
    </alternativeName>
    <alternativeName>
        <fullName evidence="1">tRNA threonylcarbamoyladenosine biosynthesis protein TsaD</fullName>
    </alternativeName>
</protein>